<sequence length="122" mass="13748">MGYRKLGRTSDQRKAMLRDLATSLIISERIETTEARAKEVRSVVEKLITLGKKGDLASRRNAAKTLRNVEILNEDETTQTALQKLFGEIAERYTERQGGYTRILKQGPRRGDGAESVIIELV</sequence>
<keyword id="KW-0002">3D-structure</keyword>
<keyword id="KW-1185">Reference proteome</keyword>
<keyword id="KW-0687">Ribonucleoprotein</keyword>
<keyword id="KW-0689">Ribosomal protein</keyword>
<protein>
    <recommendedName>
        <fullName evidence="1">Large ribosomal subunit protein bL17</fullName>
    </recommendedName>
    <alternativeName>
        <fullName evidence="2">50S ribosomal protein L17</fullName>
    </alternativeName>
</protein>
<proteinExistence type="evidence at protein level"/>
<organism>
    <name type="scientific">Staphylococcus aureus (strain NCTC 8325 / PS 47)</name>
    <dbReference type="NCBI Taxonomy" id="93061"/>
    <lineage>
        <taxon>Bacteria</taxon>
        <taxon>Bacillati</taxon>
        <taxon>Bacillota</taxon>
        <taxon>Bacilli</taxon>
        <taxon>Bacillales</taxon>
        <taxon>Staphylococcaceae</taxon>
        <taxon>Staphylococcus</taxon>
    </lineage>
</organism>
<reference key="1">
    <citation type="book" date="2006" name="Gram positive pathogens, 2nd edition">
        <title>The Staphylococcus aureus NCTC 8325 genome.</title>
        <editorList>
            <person name="Fischetti V."/>
            <person name="Novick R."/>
            <person name="Ferretti J."/>
            <person name="Portnoy D."/>
            <person name="Rood J."/>
        </editorList>
        <authorList>
            <person name="Gillaspy A.F."/>
            <person name="Worrell V."/>
            <person name="Orvis J."/>
            <person name="Roe B.A."/>
            <person name="Dyer D.W."/>
            <person name="Iandolo J.J."/>
        </authorList>
    </citation>
    <scope>NUCLEOTIDE SEQUENCE [LARGE SCALE GENOMIC DNA]</scope>
    <source>
        <strain>NCTC 8325 / PS 47</strain>
    </source>
</reference>
<gene>
    <name evidence="1" type="primary">rplQ</name>
    <name type="ordered locus">SAOUHSC_02484</name>
</gene>
<accession>Q2FW33</accession>
<name>RL17_STAA8</name>
<evidence type="ECO:0000255" key="1">
    <source>
        <dbReference type="HAMAP-Rule" id="MF_01368"/>
    </source>
</evidence>
<evidence type="ECO:0000305" key="2"/>
<evidence type="ECO:0007829" key="3">
    <source>
        <dbReference type="PDB" id="7ASM"/>
    </source>
</evidence>
<comment type="subunit">
    <text evidence="1">Part of the 50S ribosomal subunit. Contacts protein L32.</text>
</comment>
<comment type="similarity">
    <text evidence="1">Belongs to the bacterial ribosomal protein bL17 family.</text>
</comment>
<dbReference type="EMBL" id="CP000253">
    <property type="protein sequence ID" value="ABD31503.1"/>
    <property type="molecule type" value="Genomic_DNA"/>
</dbReference>
<dbReference type="RefSeq" id="WP_000542274.1">
    <property type="nucleotide sequence ID" value="NZ_LS483365.1"/>
</dbReference>
<dbReference type="RefSeq" id="YP_500952.1">
    <property type="nucleotide sequence ID" value="NC_007795.1"/>
</dbReference>
<dbReference type="PDB" id="4WCE">
    <property type="method" value="X-ray"/>
    <property type="resolution" value="3.53 A"/>
    <property type="chains" value="K=1-122"/>
</dbReference>
<dbReference type="PDB" id="4WF9">
    <property type="method" value="X-ray"/>
    <property type="resolution" value="3.43 A"/>
    <property type="chains" value="K=1-122"/>
</dbReference>
<dbReference type="PDB" id="4WFA">
    <property type="method" value="X-ray"/>
    <property type="resolution" value="3.39 A"/>
    <property type="chains" value="K=1-122"/>
</dbReference>
<dbReference type="PDB" id="4WFB">
    <property type="method" value="X-ray"/>
    <property type="resolution" value="3.43 A"/>
    <property type="chains" value="K=1-122"/>
</dbReference>
<dbReference type="PDB" id="5HKV">
    <property type="method" value="X-ray"/>
    <property type="resolution" value="3.66 A"/>
    <property type="chains" value="K=1-122"/>
</dbReference>
<dbReference type="PDB" id="5HL7">
    <property type="method" value="X-ray"/>
    <property type="resolution" value="3.55 A"/>
    <property type="chains" value="K=1-122"/>
</dbReference>
<dbReference type="PDB" id="5LI0">
    <property type="method" value="EM"/>
    <property type="resolution" value="3.80 A"/>
    <property type="chains" value="Q=4-122"/>
</dbReference>
<dbReference type="PDB" id="5ND8">
    <property type="method" value="EM"/>
    <property type="resolution" value="3.70 A"/>
    <property type="chains" value="Q=1-122"/>
</dbReference>
<dbReference type="PDB" id="5ND9">
    <property type="method" value="EM"/>
    <property type="resolution" value="3.70 A"/>
    <property type="chains" value="Q=1-122"/>
</dbReference>
<dbReference type="PDB" id="5NRG">
    <property type="method" value="X-ray"/>
    <property type="resolution" value="3.44 A"/>
    <property type="chains" value="K=1-122"/>
</dbReference>
<dbReference type="PDB" id="5TCU">
    <property type="method" value="EM"/>
    <property type="resolution" value="3.90 A"/>
    <property type="chains" value="LQ=4-122"/>
</dbReference>
<dbReference type="PDB" id="6DDD">
    <property type="method" value="EM"/>
    <property type="resolution" value="3.10 A"/>
    <property type="chains" value="Z=1-122"/>
</dbReference>
<dbReference type="PDB" id="6DDG">
    <property type="method" value="EM"/>
    <property type="resolution" value="3.10 A"/>
    <property type="chains" value="Z=1-122"/>
</dbReference>
<dbReference type="PDB" id="6HMA">
    <property type="method" value="EM"/>
    <property type="resolution" value="2.65 A"/>
    <property type="chains" value="L=3-122"/>
</dbReference>
<dbReference type="PDB" id="6SJ6">
    <property type="method" value="EM"/>
    <property type="resolution" value="3.23 A"/>
    <property type="chains" value="Q=1-122"/>
</dbReference>
<dbReference type="PDB" id="6WQN">
    <property type="method" value="EM"/>
    <property type="resolution" value="2.90 A"/>
    <property type="chains" value="Z=1-122"/>
</dbReference>
<dbReference type="PDB" id="6WQQ">
    <property type="method" value="EM"/>
    <property type="resolution" value="3.10 A"/>
    <property type="chains" value="Z=1-122"/>
</dbReference>
<dbReference type="PDB" id="6WRS">
    <property type="method" value="EM"/>
    <property type="resolution" value="3.20 A"/>
    <property type="chains" value="Z=1-122"/>
</dbReference>
<dbReference type="PDB" id="6WRU">
    <property type="method" value="EM"/>
    <property type="resolution" value="3.10 A"/>
    <property type="chains" value="Z=1-122"/>
</dbReference>
<dbReference type="PDB" id="6YEF">
    <property type="method" value="EM"/>
    <property type="resolution" value="3.20 A"/>
    <property type="chains" value="Q=1-122"/>
</dbReference>
<dbReference type="PDB" id="7ASM">
    <property type="method" value="EM"/>
    <property type="resolution" value="2.48 A"/>
    <property type="chains" value="L=3-122"/>
</dbReference>
<dbReference type="PDB" id="7NHL">
    <property type="method" value="EM"/>
    <property type="resolution" value="3.10 A"/>
    <property type="chains" value="Q=1-122"/>
</dbReference>
<dbReference type="PDB" id="7NHM">
    <property type="method" value="EM"/>
    <property type="resolution" value="3.10 A"/>
    <property type="chains" value="Q=1-122"/>
</dbReference>
<dbReference type="PDB" id="7TTU">
    <property type="method" value="EM"/>
    <property type="resolution" value="3.00 A"/>
    <property type="chains" value="Z=1-122"/>
</dbReference>
<dbReference type="PDB" id="7TTW">
    <property type="method" value="EM"/>
    <property type="resolution" value="2.90 A"/>
    <property type="chains" value="Z=1-122"/>
</dbReference>
<dbReference type="PDB" id="8P2F">
    <property type="method" value="EM"/>
    <property type="resolution" value="2.44 A"/>
    <property type="chains" value="Q=1-122"/>
</dbReference>
<dbReference type="PDB" id="8P2G">
    <property type="method" value="EM"/>
    <property type="resolution" value="2.02 A"/>
    <property type="chains" value="Q=1-122"/>
</dbReference>
<dbReference type="PDB" id="8P2H">
    <property type="method" value="EM"/>
    <property type="resolution" value="2.49 A"/>
    <property type="chains" value="Q=1-122"/>
</dbReference>
<dbReference type="PDBsum" id="4WCE"/>
<dbReference type="PDBsum" id="4WF9"/>
<dbReference type="PDBsum" id="4WFA"/>
<dbReference type="PDBsum" id="4WFB"/>
<dbReference type="PDBsum" id="5HKV"/>
<dbReference type="PDBsum" id="5HL7"/>
<dbReference type="PDBsum" id="5LI0"/>
<dbReference type="PDBsum" id="5ND8"/>
<dbReference type="PDBsum" id="5ND9"/>
<dbReference type="PDBsum" id="5NRG"/>
<dbReference type="PDBsum" id="5TCU"/>
<dbReference type="PDBsum" id="6DDD"/>
<dbReference type="PDBsum" id="6DDG"/>
<dbReference type="PDBsum" id="6HMA"/>
<dbReference type="PDBsum" id="6SJ6"/>
<dbReference type="PDBsum" id="6WQN"/>
<dbReference type="PDBsum" id="6WQQ"/>
<dbReference type="PDBsum" id="6WRS"/>
<dbReference type="PDBsum" id="6WRU"/>
<dbReference type="PDBsum" id="6YEF"/>
<dbReference type="PDBsum" id="7ASM"/>
<dbReference type="PDBsum" id="7NHL"/>
<dbReference type="PDBsum" id="7NHM"/>
<dbReference type="PDBsum" id="7TTU"/>
<dbReference type="PDBsum" id="7TTW"/>
<dbReference type="PDBsum" id="8P2F"/>
<dbReference type="PDBsum" id="8P2G"/>
<dbReference type="PDBsum" id="8P2H"/>
<dbReference type="EMDB" id="EMD-10212"/>
<dbReference type="EMDB" id="EMD-10791"/>
<dbReference type="EMDB" id="EMD-12332"/>
<dbReference type="EMDB" id="EMD-12333"/>
<dbReference type="EMDB" id="EMD-17363"/>
<dbReference type="EMDB" id="EMD-17364"/>
<dbReference type="EMDB" id="EMD-17365"/>
<dbReference type="EMDB" id="EMD-3624"/>
<dbReference type="EMDB" id="EMD-3625"/>
<dbReference type="EMDB" id="EMD-4050"/>
<dbReference type="EMDB" id="EMD-8402"/>
<dbReference type="SMR" id="Q2FW33"/>
<dbReference type="IntAct" id="Q2FW33">
    <property type="interactions" value="1"/>
</dbReference>
<dbReference type="STRING" id="93061.SAOUHSC_02484"/>
<dbReference type="PaxDb" id="1280-SAXN108_2473"/>
<dbReference type="GeneID" id="3920861"/>
<dbReference type="GeneID" id="98346535"/>
<dbReference type="KEGG" id="sao:SAOUHSC_02484"/>
<dbReference type="PATRIC" id="fig|93061.5.peg.2240"/>
<dbReference type="eggNOG" id="COG0203">
    <property type="taxonomic scope" value="Bacteria"/>
</dbReference>
<dbReference type="HOGENOM" id="CLU_074407_2_2_9"/>
<dbReference type="OrthoDB" id="9809073at2"/>
<dbReference type="EvolutionaryTrace" id="Q2FW33"/>
<dbReference type="PRO" id="PR:Q2FW33"/>
<dbReference type="Proteomes" id="UP000008816">
    <property type="component" value="Chromosome"/>
</dbReference>
<dbReference type="GO" id="GO:0022625">
    <property type="term" value="C:cytosolic large ribosomal subunit"/>
    <property type="evidence" value="ECO:0000318"/>
    <property type="project" value="GO_Central"/>
</dbReference>
<dbReference type="GO" id="GO:0003735">
    <property type="term" value="F:structural constituent of ribosome"/>
    <property type="evidence" value="ECO:0000318"/>
    <property type="project" value="GO_Central"/>
</dbReference>
<dbReference type="GO" id="GO:0006412">
    <property type="term" value="P:translation"/>
    <property type="evidence" value="ECO:0007669"/>
    <property type="project" value="UniProtKB-UniRule"/>
</dbReference>
<dbReference type="FunFam" id="3.90.1030.10:FF:000002">
    <property type="entry name" value="50S ribosomal protein L17"/>
    <property type="match status" value="1"/>
</dbReference>
<dbReference type="Gene3D" id="3.90.1030.10">
    <property type="entry name" value="Ribosomal protein L17"/>
    <property type="match status" value="1"/>
</dbReference>
<dbReference type="HAMAP" id="MF_01368">
    <property type="entry name" value="Ribosomal_bL17"/>
    <property type="match status" value="1"/>
</dbReference>
<dbReference type="InterPro" id="IPR000456">
    <property type="entry name" value="Ribosomal_bL17"/>
</dbReference>
<dbReference type="InterPro" id="IPR047859">
    <property type="entry name" value="Ribosomal_bL17_CS"/>
</dbReference>
<dbReference type="InterPro" id="IPR036373">
    <property type="entry name" value="Ribosomal_bL17_sf"/>
</dbReference>
<dbReference type="NCBIfam" id="TIGR00059">
    <property type="entry name" value="L17"/>
    <property type="match status" value="1"/>
</dbReference>
<dbReference type="PANTHER" id="PTHR14413:SF16">
    <property type="entry name" value="LARGE RIBOSOMAL SUBUNIT PROTEIN BL17M"/>
    <property type="match status" value="1"/>
</dbReference>
<dbReference type="PANTHER" id="PTHR14413">
    <property type="entry name" value="RIBOSOMAL PROTEIN L17"/>
    <property type="match status" value="1"/>
</dbReference>
<dbReference type="Pfam" id="PF01196">
    <property type="entry name" value="Ribosomal_L17"/>
    <property type="match status" value="1"/>
</dbReference>
<dbReference type="SUPFAM" id="SSF64263">
    <property type="entry name" value="Prokaryotic ribosomal protein L17"/>
    <property type="match status" value="1"/>
</dbReference>
<dbReference type="PROSITE" id="PS01167">
    <property type="entry name" value="RIBOSOMAL_L17"/>
    <property type="match status" value="1"/>
</dbReference>
<feature type="chain" id="PRO_1000055950" description="Large ribosomal subunit protein bL17">
    <location>
        <begin position="1"/>
        <end position="122"/>
    </location>
</feature>
<feature type="helix" evidence="3">
    <location>
        <begin position="10"/>
        <end position="27"/>
    </location>
</feature>
<feature type="strand" evidence="3">
    <location>
        <begin position="28"/>
        <end position="33"/>
    </location>
</feature>
<feature type="helix" evidence="3">
    <location>
        <begin position="34"/>
        <end position="53"/>
    </location>
</feature>
<feature type="helix" evidence="3">
    <location>
        <begin position="56"/>
        <end position="62"/>
    </location>
</feature>
<feature type="strand" evidence="3">
    <location>
        <begin position="64"/>
        <end position="66"/>
    </location>
</feature>
<feature type="strand" evidence="3">
    <location>
        <begin position="70"/>
        <end position="73"/>
    </location>
</feature>
<feature type="helix" evidence="3">
    <location>
        <begin position="74"/>
        <end position="76"/>
    </location>
</feature>
<feature type="strand" evidence="3">
    <location>
        <begin position="77"/>
        <end position="80"/>
    </location>
</feature>
<feature type="helix" evidence="3">
    <location>
        <begin position="81"/>
        <end position="92"/>
    </location>
</feature>
<feature type="turn" evidence="3">
    <location>
        <begin position="93"/>
        <end position="95"/>
    </location>
</feature>
<feature type="strand" evidence="3">
    <location>
        <begin position="102"/>
        <end position="108"/>
    </location>
</feature>
<feature type="strand" evidence="3">
    <location>
        <begin position="110"/>
        <end position="112"/>
    </location>
</feature>
<feature type="strand" evidence="3">
    <location>
        <begin position="115"/>
        <end position="120"/>
    </location>
</feature>